<reference key="1">
    <citation type="journal article" date="1999" name="DNA Res.">
        <title>Complete structure of the chloroplast genome of Arabidopsis thaliana.</title>
        <authorList>
            <person name="Sato S."/>
            <person name="Nakamura Y."/>
            <person name="Kaneko T."/>
            <person name="Asamizu E."/>
            <person name="Tabata S."/>
        </authorList>
    </citation>
    <scope>NUCLEOTIDE SEQUENCE [LARGE SCALE GENOMIC DNA]</scope>
    <source>
        <strain>cv. Columbia</strain>
    </source>
</reference>
<evidence type="ECO:0000255" key="1">
    <source>
        <dbReference type="HAMAP-Rule" id="MF_01394"/>
    </source>
</evidence>
<proteinExistence type="evidence at protein level"/>
<dbReference type="EC" id="7.1.1.-" evidence="1"/>
<dbReference type="EMBL" id="AP000423">
    <property type="protein sequence ID" value="BAA84390.1"/>
    <property type="molecule type" value="Genomic_DNA"/>
</dbReference>
<dbReference type="RefSeq" id="NP_051064.1">
    <property type="nucleotide sequence ID" value="NC_000932.1"/>
</dbReference>
<dbReference type="PDB" id="7WFF">
    <property type="method" value="EM"/>
    <property type="resolution" value="3.59 A"/>
    <property type="chains" value="C=1-120"/>
</dbReference>
<dbReference type="PDB" id="7WG5">
    <property type="method" value="EM"/>
    <property type="resolution" value="3.89 A"/>
    <property type="chains" value="C=1-120"/>
</dbReference>
<dbReference type="PDBsum" id="7WFF"/>
<dbReference type="PDBsum" id="7WG5"/>
<dbReference type="EMDB" id="EMD-32464"/>
<dbReference type="EMDB" id="EMD-32477"/>
<dbReference type="SMR" id="P56751"/>
<dbReference type="FunCoup" id="P56751">
    <property type="interactions" value="66"/>
</dbReference>
<dbReference type="STRING" id="3702.P56751"/>
<dbReference type="TCDB" id="3.D.1.8.1">
    <property type="family name" value="the h+ or na+-translocating nadh dehydrogenase (ndh) family"/>
</dbReference>
<dbReference type="PaxDb" id="3702-ATCG00440.1"/>
<dbReference type="ProteomicsDB" id="248661"/>
<dbReference type="EnsemblPlants" id="ATCG00440.1">
    <property type="protein sequence ID" value="ATCG00440.1"/>
    <property type="gene ID" value="ATCG00440"/>
</dbReference>
<dbReference type="GeneID" id="844762"/>
<dbReference type="Gramene" id="ATCG00440.1">
    <property type="protein sequence ID" value="ATCG00440.1"/>
    <property type="gene ID" value="ATCG00440"/>
</dbReference>
<dbReference type="KEGG" id="ath:ArthCp027"/>
<dbReference type="Araport" id="ATCG00440"/>
<dbReference type="TAIR" id="ATCG00440">
    <property type="gene designation" value="NDHC"/>
</dbReference>
<dbReference type="eggNOG" id="KOG4662">
    <property type="taxonomic scope" value="Eukaryota"/>
</dbReference>
<dbReference type="HOGENOM" id="CLU_119549_1_1_1"/>
<dbReference type="InParanoid" id="P56751"/>
<dbReference type="OMA" id="YVYAFLY"/>
<dbReference type="BioCyc" id="ARA:ATCG00440-MONOMER"/>
<dbReference type="PRO" id="PR:P56751"/>
<dbReference type="Proteomes" id="UP000006548">
    <property type="component" value="Chloroplast Pltd"/>
</dbReference>
<dbReference type="ExpressionAtlas" id="P56751">
    <property type="expression patterns" value="baseline and differential"/>
</dbReference>
<dbReference type="GO" id="GO:0009507">
    <property type="term" value="C:chloroplast"/>
    <property type="evidence" value="ECO:0007005"/>
    <property type="project" value="TAIR"/>
</dbReference>
<dbReference type="GO" id="GO:0009535">
    <property type="term" value="C:chloroplast thylakoid membrane"/>
    <property type="evidence" value="ECO:0007669"/>
    <property type="project" value="UniProtKB-SubCell"/>
</dbReference>
<dbReference type="GO" id="GO:0008137">
    <property type="term" value="F:NADH dehydrogenase (ubiquinone) activity"/>
    <property type="evidence" value="ECO:0007669"/>
    <property type="project" value="InterPro"/>
</dbReference>
<dbReference type="GO" id="GO:0003954">
    <property type="term" value="F:NADH dehydrogenase activity"/>
    <property type="evidence" value="ECO:0000304"/>
    <property type="project" value="TAIR"/>
</dbReference>
<dbReference type="GO" id="GO:0048038">
    <property type="term" value="F:quinone binding"/>
    <property type="evidence" value="ECO:0007669"/>
    <property type="project" value="UniProtKB-KW"/>
</dbReference>
<dbReference type="GO" id="GO:0015979">
    <property type="term" value="P:photosynthesis"/>
    <property type="evidence" value="ECO:0000304"/>
    <property type="project" value="TAIR"/>
</dbReference>
<dbReference type="GO" id="GO:0019684">
    <property type="term" value="P:photosynthesis, light reaction"/>
    <property type="evidence" value="ECO:0007669"/>
    <property type="project" value="UniProtKB-UniRule"/>
</dbReference>
<dbReference type="FunFam" id="1.20.58.1610:FF:000001">
    <property type="entry name" value="NAD(P)H-quinone oxidoreductase subunit 3, chloroplastic"/>
    <property type="match status" value="1"/>
</dbReference>
<dbReference type="Gene3D" id="1.20.58.1610">
    <property type="entry name" value="NADH:ubiquinone/plastoquinone oxidoreductase, chain 3"/>
    <property type="match status" value="1"/>
</dbReference>
<dbReference type="HAMAP" id="MF_01394">
    <property type="entry name" value="NDH1_NuoA"/>
    <property type="match status" value="1"/>
</dbReference>
<dbReference type="InterPro" id="IPR023043">
    <property type="entry name" value="NAD(P)H_OxRDtase_bac/plastid"/>
</dbReference>
<dbReference type="InterPro" id="IPR000440">
    <property type="entry name" value="NADH_UbQ/plastoQ_OxRdtase_su3"/>
</dbReference>
<dbReference type="InterPro" id="IPR038430">
    <property type="entry name" value="NDAH_ubi_oxred_su3_sf"/>
</dbReference>
<dbReference type="PANTHER" id="PTHR11058">
    <property type="entry name" value="NADH-UBIQUINONE OXIDOREDUCTASE CHAIN 3"/>
    <property type="match status" value="1"/>
</dbReference>
<dbReference type="PANTHER" id="PTHR11058:SF9">
    <property type="entry name" value="NADH-UBIQUINONE OXIDOREDUCTASE CHAIN 3"/>
    <property type="match status" value="1"/>
</dbReference>
<dbReference type="Pfam" id="PF00507">
    <property type="entry name" value="Oxidored_q4"/>
    <property type="match status" value="1"/>
</dbReference>
<protein>
    <recommendedName>
        <fullName evidence="1">NAD(P)H-quinone oxidoreductase subunit 3, chloroplastic</fullName>
        <ecNumber evidence="1">7.1.1.-</ecNumber>
    </recommendedName>
    <alternativeName>
        <fullName evidence="1">NAD(P)H dehydrogenase subunit 3</fullName>
    </alternativeName>
    <alternativeName>
        <fullName evidence="1">NADH-plastoquinone oxidoreductase subunit 3</fullName>
    </alternativeName>
</protein>
<organism>
    <name type="scientific">Arabidopsis thaliana</name>
    <name type="common">Mouse-ear cress</name>
    <dbReference type="NCBI Taxonomy" id="3702"/>
    <lineage>
        <taxon>Eukaryota</taxon>
        <taxon>Viridiplantae</taxon>
        <taxon>Streptophyta</taxon>
        <taxon>Embryophyta</taxon>
        <taxon>Tracheophyta</taxon>
        <taxon>Spermatophyta</taxon>
        <taxon>Magnoliopsida</taxon>
        <taxon>eudicotyledons</taxon>
        <taxon>Gunneridae</taxon>
        <taxon>Pentapetalae</taxon>
        <taxon>rosids</taxon>
        <taxon>malvids</taxon>
        <taxon>Brassicales</taxon>
        <taxon>Brassicaceae</taxon>
        <taxon>Camelineae</taxon>
        <taxon>Arabidopsis</taxon>
    </lineage>
</organism>
<keyword id="KW-0002">3D-structure</keyword>
<keyword id="KW-0150">Chloroplast</keyword>
<keyword id="KW-0472">Membrane</keyword>
<keyword id="KW-0520">NAD</keyword>
<keyword id="KW-0521">NADP</keyword>
<keyword id="KW-0934">Plastid</keyword>
<keyword id="KW-0618">Plastoquinone</keyword>
<keyword id="KW-0874">Quinone</keyword>
<keyword id="KW-1185">Reference proteome</keyword>
<keyword id="KW-0793">Thylakoid</keyword>
<keyword id="KW-1278">Translocase</keyword>
<keyword id="KW-0812">Transmembrane</keyword>
<keyword id="KW-1133">Transmembrane helix</keyword>
<keyword id="KW-0813">Transport</keyword>
<gene>
    <name evidence="1" type="primary">ndhC</name>
    <name type="ordered locus">AtCg00440</name>
</gene>
<accession>P56751</accession>
<comment type="function">
    <text evidence="1">NDH shuttles electrons from NAD(P)H:plastoquinone, via FMN and iron-sulfur (Fe-S) centers, to quinones in the photosynthetic chain and possibly in a chloroplast respiratory chain. The immediate electron acceptor for the enzyme in this species is believed to be plastoquinone. Couples the redox reaction to proton translocation, and thus conserves the redox energy in a proton gradient.</text>
</comment>
<comment type="catalytic activity">
    <reaction evidence="1">
        <text>a plastoquinone + NADH + (n+1) H(+)(in) = a plastoquinol + NAD(+) + n H(+)(out)</text>
        <dbReference type="Rhea" id="RHEA:42608"/>
        <dbReference type="Rhea" id="RHEA-COMP:9561"/>
        <dbReference type="Rhea" id="RHEA-COMP:9562"/>
        <dbReference type="ChEBI" id="CHEBI:15378"/>
        <dbReference type="ChEBI" id="CHEBI:17757"/>
        <dbReference type="ChEBI" id="CHEBI:57540"/>
        <dbReference type="ChEBI" id="CHEBI:57945"/>
        <dbReference type="ChEBI" id="CHEBI:62192"/>
    </reaction>
</comment>
<comment type="catalytic activity">
    <reaction evidence="1">
        <text>a plastoquinone + NADPH + (n+1) H(+)(in) = a plastoquinol + NADP(+) + n H(+)(out)</text>
        <dbReference type="Rhea" id="RHEA:42612"/>
        <dbReference type="Rhea" id="RHEA-COMP:9561"/>
        <dbReference type="Rhea" id="RHEA-COMP:9562"/>
        <dbReference type="ChEBI" id="CHEBI:15378"/>
        <dbReference type="ChEBI" id="CHEBI:17757"/>
        <dbReference type="ChEBI" id="CHEBI:57783"/>
        <dbReference type="ChEBI" id="CHEBI:58349"/>
        <dbReference type="ChEBI" id="CHEBI:62192"/>
    </reaction>
</comment>
<comment type="subunit">
    <text evidence="1">NDH is composed of at least 16 different subunits, 5 of which are encoded in the nucleus.</text>
</comment>
<comment type="subcellular location">
    <subcellularLocation>
        <location evidence="1">Plastid</location>
        <location evidence="1">Chloroplast thylakoid membrane</location>
        <topology evidence="1">Multi-pass membrane protein</topology>
    </subcellularLocation>
</comment>
<comment type="similarity">
    <text evidence="1">Belongs to the complex I subunit 3 family.</text>
</comment>
<name>NU3C_ARATH</name>
<sequence length="120" mass="13839">MFLLYEYDIFWAFLLISSAIPVLAFLISGVLSPIRKGPEKLSSYESGIEPIGDAWLQFRIRYYMFALVFVVFDVETVFLYPWAMSFDVLGVSAFIEAFIFVLILILGLVYAWRKGALEWS</sequence>
<geneLocation type="chloroplast"/>
<feature type="chain" id="PRO_0000117844" description="NAD(P)H-quinone oxidoreductase subunit 3, chloroplastic">
    <location>
        <begin position="1"/>
        <end position="120"/>
    </location>
</feature>
<feature type="transmembrane region" description="Helical" evidence="1">
    <location>
        <begin position="9"/>
        <end position="29"/>
    </location>
</feature>
<feature type="transmembrane region" description="Helical" evidence="1">
    <location>
        <begin position="64"/>
        <end position="84"/>
    </location>
</feature>
<feature type="transmembrane region" description="Helical" evidence="1">
    <location>
        <begin position="88"/>
        <end position="108"/>
    </location>
</feature>